<protein>
    <recommendedName>
        <fullName evidence="1">Small ribosomal subunit protein bS18</fullName>
    </recommendedName>
    <alternativeName>
        <fullName evidence="2">30S ribosomal protein S18</fullName>
    </alternativeName>
</protein>
<keyword id="KW-0687">Ribonucleoprotein</keyword>
<keyword id="KW-0689">Ribosomal protein</keyword>
<keyword id="KW-0694">RNA-binding</keyword>
<keyword id="KW-0699">rRNA-binding</keyword>
<sequence>MAGREGGRRQRRTKRKVCTFCAEKSEAIDYKDINKLRKFVTERGKILPRRISGNCAKHQRELTRAIKRARNIALLPFTTE</sequence>
<comment type="function">
    <text evidence="1">Binds as a heterodimer with protein bS6 to the central domain of the 16S rRNA, where it helps stabilize the platform of the 30S subunit.</text>
</comment>
<comment type="subunit">
    <text evidence="1">Part of the 30S ribosomal subunit. Forms a tight heterodimer with protein bS6.</text>
</comment>
<comment type="similarity">
    <text evidence="1">Belongs to the bacterial ribosomal protein bS18 family.</text>
</comment>
<name>RS18_CLOBK</name>
<accession>B1IHQ2</accession>
<evidence type="ECO:0000255" key="1">
    <source>
        <dbReference type="HAMAP-Rule" id="MF_00270"/>
    </source>
</evidence>
<evidence type="ECO:0000305" key="2"/>
<dbReference type="EMBL" id="CP000939">
    <property type="protein sequence ID" value="ACA45286.1"/>
    <property type="molecule type" value="Genomic_DNA"/>
</dbReference>
<dbReference type="RefSeq" id="WP_003359407.1">
    <property type="nucleotide sequence ID" value="NC_010516.1"/>
</dbReference>
<dbReference type="SMR" id="B1IHQ2"/>
<dbReference type="GeneID" id="5188014"/>
<dbReference type="KEGG" id="cbb:CLD_0848"/>
<dbReference type="HOGENOM" id="CLU_148710_2_2_9"/>
<dbReference type="Proteomes" id="UP000008541">
    <property type="component" value="Chromosome"/>
</dbReference>
<dbReference type="GO" id="GO:0022627">
    <property type="term" value="C:cytosolic small ribosomal subunit"/>
    <property type="evidence" value="ECO:0007669"/>
    <property type="project" value="TreeGrafter"/>
</dbReference>
<dbReference type="GO" id="GO:0070181">
    <property type="term" value="F:small ribosomal subunit rRNA binding"/>
    <property type="evidence" value="ECO:0007669"/>
    <property type="project" value="TreeGrafter"/>
</dbReference>
<dbReference type="GO" id="GO:0003735">
    <property type="term" value="F:structural constituent of ribosome"/>
    <property type="evidence" value="ECO:0007669"/>
    <property type="project" value="InterPro"/>
</dbReference>
<dbReference type="GO" id="GO:0006412">
    <property type="term" value="P:translation"/>
    <property type="evidence" value="ECO:0007669"/>
    <property type="project" value="UniProtKB-UniRule"/>
</dbReference>
<dbReference type="FunFam" id="4.10.640.10:FF:000004">
    <property type="entry name" value="30S ribosomal protein S18"/>
    <property type="match status" value="1"/>
</dbReference>
<dbReference type="Gene3D" id="4.10.640.10">
    <property type="entry name" value="Ribosomal protein S18"/>
    <property type="match status" value="1"/>
</dbReference>
<dbReference type="HAMAP" id="MF_00270">
    <property type="entry name" value="Ribosomal_bS18"/>
    <property type="match status" value="1"/>
</dbReference>
<dbReference type="InterPro" id="IPR001648">
    <property type="entry name" value="Ribosomal_bS18"/>
</dbReference>
<dbReference type="InterPro" id="IPR018275">
    <property type="entry name" value="Ribosomal_bS18_CS"/>
</dbReference>
<dbReference type="InterPro" id="IPR036870">
    <property type="entry name" value="Ribosomal_bS18_sf"/>
</dbReference>
<dbReference type="NCBIfam" id="TIGR00165">
    <property type="entry name" value="S18"/>
    <property type="match status" value="1"/>
</dbReference>
<dbReference type="PANTHER" id="PTHR13479">
    <property type="entry name" value="30S RIBOSOMAL PROTEIN S18"/>
    <property type="match status" value="1"/>
</dbReference>
<dbReference type="PANTHER" id="PTHR13479:SF40">
    <property type="entry name" value="SMALL RIBOSOMAL SUBUNIT PROTEIN BS18M"/>
    <property type="match status" value="1"/>
</dbReference>
<dbReference type="Pfam" id="PF01084">
    <property type="entry name" value="Ribosomal_S18"/>
    <property type="match status" value="1"/>
</dbReference>
<dbReference type="PRINTS" id="PR00974">
    <property type="entry name" value="RIBOSOMALS18"/>
</dbReference>
<dbReference type="SUPFAM" id="SSF46911">
    <property type="entry name" value="Ribosomal protein S18"/>
    <property type="match status" value="1"/>
</dbReference>
<dbReference type="PROSITE" id="PS00057">
    <property type="entry name" value="RIBOSOMAL_S18"/>
    <property type="match status" value="1"/>
</dbReference>
<reference key="1">
    <citation type="journal article" date="2007" name="PLoS ONE">
        <title>Analysis of the neurotoxin complex genes in Clostridium botulinum A1-A4 and B1 strains: BoNT/A3, /Ba4 and /B1 clusters are located within plasmids.</title>
        <authorList>
            <person name="Smith T.J."/>
            <person name="Hill K.K."/>
            <person name="Foley B.T."/>
            <person name="Detter J.C."/>
            <person name="Munk A.C."/>
            <person name="Bruce D.C."/>
            <person name="Doggett N.A."/>
            <person name="Smith L.A."/>
            <person name="Marks J.D."/>
            <person name="Xie G."/>
            <person name="Brettin T.S."/>
        </authorList>
    </citation>
    <scope>NUCLEOTIDE SEQUENCE [LARGE SCALE GENOMIC DNA]</scope>
    <source>
        <strain>Okra / Type B1</strain>
    </source>
</reference>
<feature type="chain" id="PRO_1000114412" description="Small ribosomal subunit protein bS18">
    <location>
        <begin position="1"/>
        <end position="80"/>
    </location>
</feature>
<gene>
    <name evidence="1" type="primary">rpsR</name>
    <name type="ordered locus">CLD_0848</name>
</gene>
<organism>
    <name type="scientific">Clostridium botulinum (strain Okra / Type B1)</name>
    <dbReference type="NCBI Taxonomy" id="498213"/>
    <lineage>
        <taxon>Bacteria</taxon>
        <taxon>Bacillati</taxon>
        <taxon>Bacillota</taxon>
        <taxon>Clostridia</taxon>
        <taxon>Eubacteriales</taxon>
        <taxon>Clostridiaceae</taxon>
        <taxon>Clostridium</taxon>
    </lineage>
</organism>
<proteinExistence type="inferred from homology"/>